<accession>Q84666</accession>
<comment type="function">
    <text evidence="3">One of the minor capsid proteins that constitute a network internal to the major capsid proteins and outside the lipid membrane (PubMed:30674888). The minor capsid proteins glue and stabilize the capsomers (PubMed:30674888). the p11 zip protein binds together the neighboring symmetrons (PubMed:30674888).</text>
</comment>
<comment type="subunit">
    <text evidence="3">Interacts with the major capsid protein.</text>
</comment>
<comment type="subcellular location">
    <subcellularLocation>
        <location evidence="3">Virion</location>
    </subcellularLocation>
</comment>
<comment type="induction">
    <text evidence="2">Expressed in the late phase of the viral replicative cycle.</text>
</comment>
<comment type="domain">
    <text evidence="5">The hydrophobic region might anchor the protein in the underlying inner membrane.</text>
</comment>
<organism evidence="6 7">
    <name type="scientific">Paramecium bursaria Chlorella virus 1</name>
    <name type="common">PBCV-1</name>
    <dbReference type="NCBI Taxonomy" id="10506"/>
    <lineage>
        <taxon>Viruses</taxon>
        <taxon>Varidnaviria</taxon>
        <taxon>Bamfordvirae</taxon>
        <taxon>Nucleocytoviricota</taxon>
        <taxon>Megaviricetes</taxon>
        <taxon>Algavirales</taxon>
        <taxon>Phycodnaviridae</taxon>
        <taxon>Chlorovirus</taxon>
    </lineage>
</organism>
<protein>
    <recommendedName>
        <fullName>Minor capsid protein P11</fullName>
    </recommendedName>
</protein>
<evidence type="ECO:0000256" key="1">
    <source>
        <dbReference type="SAM" id="MobiDB-lite"/>
    </source>
</evidence>
<evidence type="ECO:0000269" key="2">
    <source>
    </source>
</evidence>
<evidence type="ECO:0000269" key="3">
    <source>
    </source>
</evidence>
<evidence type="ECO:0000305" key="4"/>
<evidence type="ECO:0000305" key="5">
    <source>
    </source>
</evidence>
<evidence type="ECO:0000312" key="6">
    <source>
        <dbReference type="EMBL" id="AAC96720.1"/>
    </source>
</evidence>
<evidence type="ECO:0000312" key="7">
    <source>
        <dbReference type="Proteomes" id="UP000000862"/>
    </source>
</evidence>
<evidence type="ECO:0007744" key="8">
    <source>
        <dbReference type="PDB" id="6NCL"/>
    </source>
</evidence>
<evidence type="ECO:0007744" key="9">
    <source>
        <dbReference type="PDB" id="8H2I"/>
    </source>
</evidence>
<organismHost>
    <name type="scientific">Chlorella</name>
    <dbReference type="NCBI Taxonomy" id="3071"/>
</organismHost>
<proteinExistence type="evidence at protein level"/>
<name>P11_PBCV1</name>
<feature type="chain" id="PRO_0000460577" description="Minor capsid protein P11">
    <location>
        <begin position="1"/>
        <end position="207"/>
    </location>
</feature>
<feature type="region of interest" description="Hydrophobic" evidence="4">
    <location>
        <begin position="7"/>
        <end position="23"/>
    </location>
</feature>
<feature type="region of interest" description="Disordered" evidence="1">
    <location>
        <begin position="63"/>
        <end position="82"/>
    </location>
</feature>
<dbReference type="EMBL" id="JF411744">
    <property type="protein sequence ID" value="AAC96720.1"/>
    <property type="molecule type" value="Genomic_DNA"/>
</dbReference>
<dbReference type="PIR" id="T17852">
    <property type="entry name" value="T17852"/>
</dbReference>
<dbReference type="RefSeq" id="NP_048709.1">
    <property type="nucleotide sequence ID" value="NC_000852.5"/>
</dbReference>
<dbReference type="PDB" id="6NCL">
    <property type="method" value="EM"/>
    <property type="resolution" value="3.50 A"/>
    <property type="chains" value="a9/b0/b1/b2/b3/b4/b5/b7/b8/c0/c1/l5=1-207"/>
</dbReference>
<dbReference type="PDB" id="8H2I">
    <property type="method" value="EM"/>
    <property type="resolution" value="3.80 A"/>
    <property type="chains" value="bT/bU/bV/bW/bX/bY/bZ/ca/cb/cc/cd/ce=1-207"/>
</dbReference>
<dbReference type="PDBsum" id="6NCL"/>
<dbReference type="PDBsum" id="8H2I"/>
<dbReference type="EMDB" id="EMD-0436"/>
<dbReference type="EMDB" id="EMD-34438"/>
<dbReference type="GeneID" id="918301"/>
<dbReference type="KEGG" id="vg:918301"/>
<dbReference type="OrthoDB" id="11031at10239"/>
<dbReference type="Proteomes" id="UP000000862">
    <property type="component" value="Genome"/>
</dbReference>
<dbReference type="GO" id="GO:0019028">
    <property type="term" value="C:viral capsid"/>
    <property type="evidence" value="ECO:0007669"/>
    <property type="project" value="UniProtKB-KW"/>
</dbReference>
<dbReference type="InterPro" id="IPR055730">
    <property type="entry name" value="P11_C"/>
</dbReference>
<dbReference type="Pfam" id="PF23983">
    <property type="entry name" value="P11_C"/>
    <property type="match status" value="1"/>
</dbReference>
<sequence>MDMHMIVKVVAILAVLFLVYKLWESMNKPNASPLKIQNPYEKYMNSAEGGEYDAEDDDIYYPETDAEDDDIYTGETDDMYDGEDDDIYVQEGDDIEDAEDEPYDDSADMEQDVPKVQQPMMPLLTPSSQLLPKPSPEAADFAQFAPKNLQAQNFLTATQWIGVNTQGSSLKNANYDLRADPIIPKADVGPWMMSSVDPNIYQKPLFG</sequence>
<gene>
    <name evidence="6" type="primary">A352L</name>
</gene>
<reference key="1">
    <citation type="journal article" date="1996" name="Virology">
        <title>Analysis of 76 kb of the chlorella virus PBCV-1 330-kb genome: map positions 182 to 258.</title>
        <authorList>
            <person name="Kutish G.F."/>
            <person name="Li Y."/>
            <person name="Lu Z."/>
            <person name="Furuta M."/>
            <person name="Rock D.L."/>
            <person name="van Etten J.L."/>
        </authorList>
    </citation>
    <scope>NUCLEOTIDE SEQUENCE [LARGE SCALE GENOMIC DNA]</scope>
</reference>
<reference key="2">
    <citation type="journal article" date="2010" name="J. Virol.">
        <title>Microarray analysis of Paramecium bursaria chlorella virus 1 transcription.</title>
        <authorList>
            <person name="Yanai-Balser G.M."/>
            <person name="Duncan G.A."/>
            <person name="Eudy J.D."/>
            <person name="Wang D."/>
            <person name="Li X."/>
            <person name="Agarkova I.V."/>
            <person name="Dunigan D.D."/>
            <person name="Van Etten J.L."/>
        </authorList>
    </citation>
    <scope>INDUCTION</scope>
</reference>
<reference evidence="8" key="3">
    <citation type="journal article" date="2019" name="Nat. Commun.">
        <title>Near-atomic structure of a giant virus.</title>
        <authorList>
            <person name="Fang Q."/>
            <person name="Zhu D."/>
            <person name="Agarkova I."/>
            <person name="Adhikari J."/>
            <person name="Klose T."/>
            <person name="Liu Y."/>
            <person name="Chen Z."/>
            <person name="Sun Y."/>
            <person name="Gross M.L."/>
            <person name="Van Etten J.L."/>
            <person name="Zhang X."/>
            <person name="Rossmann M.G."/>
        </authorList>
    </citation>
    <scope>STRUCTURE BY ELECTRON MICROSCOPY (3.50 ANGSTROMS)</scope>
    <scope>FUNCTION</scope>
    <scope>SUBCELLULAR LOCATION</scope>
    <scope>INTERACTION WITH THE MAJOR CAPSID PROTEIN</scope>
</reference>
<reference evidence="9" key="4">
    <citation type="journal article" date="2022" name="Nat. Commun.">
        <title>Near-atomic, non-icosahedrally averaged structure of giant virus Paramecium bursaria chlorella virus 1.</title>
        <authorList>
            <person name="Shao Q."/>
            <person name="Agarkova I.V."/>
            <person name="Noel E.A."/>
            <person name="Dunigan D.D."/>
            <person name="Liu Y."/>
            <person name="Wang A."/>
            <person name="Guo M."/>
            <person name="Xie L."/>
            <person name="Zhao X."/>
            <person name="Rossmann M.G."/>
            <person name="Van Etten J.L."/>
            <person name="Klose T."/>
            <person name="Fang Q."/>
        </authorList>
    </citation>
    <scope>STRUCTURE BY ELECTRON MICROSCOPY (3.80 ANGSTROMS)</scope>
</reference>
<keyword id="KW-0002">3D-structure</keyword>
<keyword id="KW-0167">Capsid protein</keyword>
<keyword id="KW-0426">Late protein</keyword>
<keyword id="KW-1185">Reference proteome</keyword>
<keyword id="KW-0946">Virion</keyword>